<accession>Q01Q40</accession>
<sequence>MHVPVMPAEAIELLAIRPEGVYLDATAGLGGHSGLIARQLTTGTVIANDRDTRSLEMARANTAEWSDRMCFHYGSFGSLSDAVSQAGFEKVDGLLADLGVSRYQLTAPDRGFSFMADGPLDMRMDASIQTTAADLVNHTDEKTLADLIYQMGEERRARRIARAIVRARPLRSTLHLADVVERAVPRTGRLHPATKTFMALRMAVNDEPGELRRLLEIAPGLLKSGGRMVVISFMSSDDRMVKEKFKELGQSKQATILTKHPLQPSDEESFNNPASRSAKLRALEMR</sequence>
<keyword id="KW-0963">Cytoplasm</keyword>
<keyword id="KW-0489">Methyltransferase</keyword>
<keyword id="KW-0698">rRNA processing</keyword>
<keyword id="KW-0949">S-adenosyl-L-methionine</keyword>
<keyword id="KW-0808">Transferase</keyword>
<feature type="chain" id="PRO_0000318880" description="Ribosomal RNA small subunit methyltransferase H">
    <location>
        <begin position="1"/>
        <end position="286"/>
    </location>
</feature>
<feature type="region of interest" description="Disordered" evidence="2">
    <location>
        <begin position="260"/>
        <end position="286"/>
    </location>
</feature>
<feature type="binding site" evidence="1">
    <location>
        <begin position="30"/>
        <end position="32"/>
    </location>
    <ligand>
        <name>S-adenosyl-L-methionine</name>
        <dbReference type="ChEBI" id="CHEBI:59789"/>
    </ligand>
</feature>
<feature type="binding site" evidence="1">
    <location>
        <position position="49"/>
    </location>
    <ligand>
        <name>S-adenosyl-L-methionine</name>
        <dbReference type="ChEBI" id="CHEBI:59789"/>
    </ligand>
</feature>
<feature type="binding site" evidence="1">
    <location>
        <position position="88"/>
    </location>
    <ligand>
        <name>S-adenosyl-L-methionine</name>
        <dbReference type="ChEBI" id="CHEBI:59789"/>
    </ligand>
</feature>
<feature type="binding site" evidence="1">
    <location>
        <position position="97"/>
    </location>
    <ligand>
        <name>S-adenosyl-L-methionine</name>
        <dbReference type="ChEBI" id="CHEBI:59789"/>
    </ligand>
</feature>
<feature type="binding site" evidence="1">
    <location>
        <position position="104"/>
    </location>
    <ligand>
        <name>S-adenosyl-L-methionine</name>
        <dbReference type="ChEBI" id="CHEBI:59789"/>
    </ligand>
</feature>
<protein>
    <recommendedName>
        <fullName evidence="1">Ribosomal RNA small subunit methyltransferase H</fullName>
        <ecNumber evidence="1">2.1.1.199</ecNumber>
    </recommendedName>
    <alternativeName>
        <fullName evidence="1">16S rRNA m(4)C1402 methyltransferase</fullName>
    </alternativeName>
    <alternativeName>
        <fullName evidence="1">rRNA (cytosine-N(4)-)-methyltransferase RsmH</fullName>
    </alternativeName>
</protein>
<name>RSMH_SOLUE</name>
<evidence type="ECO:0000255" key="1">
    <source>
        <dbReference type="HAMAP-Rule" id="MF_01007"/>
    </source>
</evidence>
<evidence type="ECO:0000256" key="2">
    <source>
        <dbReference type="SAM" id="MobiDB-lite"/>
    </source>
</evidence>
<comment type="function">
    <text evidence="1">Specifically methylates the N4 position of cytidine in position 1402 (C1402) of 16S rRNA.</text>
</comment>
<comment type="catalytic activity">
    <reaction evidence="1">
        <text>cytidine(1402) in 16S rRNA + S-adenosyl-L-methionine = N(4)-methylcytidine(1402) in 16S rRNA + S-adenosyl-L-homocysteine + H(+)</text>
        <dbReference type="Rhea" id="RHEA:42928"/>
        <dbReference type="Rhea" id="RHEA-COMP:10286"/>
        <dbReference type="Rhea" id="RHEA-COMP:10287"/>
        <dbReference type="ChEBI" id="CHEBI:15378"/>
        <dbReference type="ChEBI" id="CHEBI:57856"/>
        <dbReference type="ChEBI" id="CHEBI:59789"/>
        <dbReference type="ChEBI" id="CHEBI:74506"/>
        <dbReference type="ChEBI" id="CHEBI:82748"/>
        <dbReference type="EC" id="2.1.1.199"/>
    </reaction>
</comment>
<comment type="subcellular location">
    <subcellularLocation>
        <location evidence="1">Cytoplasm</location>
    </subcellularLocation>
</comment>
<comment type="similarity">
    <text evidence="1">Belongs to the methyltransferase superfamily. RsmH family.</text>
</comment>
<proteinExistence type="inferred from homology"/>
<dbReference type="EC" id="2.1.1.199" evidence="1"/>
<dbReference type="EMBL" id="CP000473">
    <property type="protein sequence ID" value="ABJ88230.1"/>
    <property type="molecule type" value="Genomic_DNA"/>
</dbReference>
<dbReference type="SMR" id="Q01Q40"/>
<dbReference type="FunCoup" id="Q01Q40">
    <property type="interactions" value="621"/>
</dbReference>
<dbReference type="STRING" id="234267.Acid_7319"/>
<dbReference type="KEGG" id="sus:Acid_7319"/>
<dbReference type="eggNOG" id="COG0275">
    <property type="taxonomic scope" value="Bacteria"/>
</dbReference>
<dbReference type="HOGENOM" id="CLU_038422_3_0_0"/>
<dbReference type="InParanoid" id="Q01Q40"/>
<dbReference type="OrthoDB" id="9806637at2"/>
<dbReference type="GO" id="GO:0005737">
    <property type="term" value="C:cytoplasm"/>
    <property type="evidence" value="ECO:0007669"/>
    <property type="project" value="UniProtKB-SubCell"/>
</dbReference>
<dbReference type="GO" id="GO:0071424">
    <property type="term" value="F:rRNA (cytosine-N4-)-methyltransferase activity"/>
    <property type="evidence" value="ECO:0007669"/>
    <property type="project" value="UniProtKB-UniRule"/>
</dbReference>
<dbReference type="GO" id="GO:0070475">
    <property type="term" value="P:rRNA base methylation"/>
    <property type="evidence" value="ECO:0007669"/>
    <property type="project" value="UniProtKB-UniRule"/>
</dbReference>
<dbReference type="Gene3D" id="1.10.150.170">
    <property type="entry name" value="Putative methyltransferase TM0872, insert domain"/>
    <property type="match status" value="1"/>
</dbReference>
<dbReference type="Gene3D" id="3.40.50.150">
    <property type="entry name" value="Vaccinia Virus protein VP39"/>
    <property type="match status" value="1"/>
</dbReference>
<dbReference type="HAMAP" id="MF_01007">
    <property type="entry name" value="16SrRNA_methyltr_H"/>
    <property type="match status" value="1"/>
</dbReference>
<dbReference type="InterPro" id="IPR002903">
    <property type="entry name" value="RsmH"/>
</dbReference>
<dbReference type="InterPro" id="IPR023397">
    <property type="entry name" value="SAM-dep_MeTrfase_MraW_recog"/>
</dbReference>
<dbReference type="InterPro" id="IPR029063">
    <property type="entry name" value="SAM-dependent_MTases_sf"/>
</dbReference>
<dbReference type="NCBIfam" id="TIGR00006">
    <property type="entry name" value="16S rRNA (cytosine(1402)-N(4))-methyltransferase RsmH"/>
    <property type="match status" value="1"/>
</dbReference>
<dbReference type="PANTHER" id="PTHR11265:SF0">
    <property type="entry name" value="12S RRNA N4-METHYLCYTIDINE METHYLTRANSFERASE"/>
    <property type="match status" value="1"/>
</dbReference>
<dbReference type="PANTHER" id="PTHR11265">
    <property type="entry name" value="S-ADENOSYL-METHYLTRANSFERASE MRAW"/>
    <property type="match status" value="1"/>
</dbReference>
<dbReference type="Pfam" id="PF01795">
    <property type="entry name" value="Methyltransf_5"/>
    <property type="match status" value="1"/>
</dbReference>
<dbReference type="PIRSF" id="PIRSF004486">
    <property type="entry name" value="MraW"/>
    <property type="match status" value="1"/>
</dbReference>
<dbReference type="SUPFAM" id="SSF81799">
    <property type="entry name" value="Putative methyltransferase TM0872, insert domain"/>
    <property type="match status" value="1"/>
</dbReference>
<dbReference type="SUPFAM" id="SSF53335">
    <property type="entry name" value="S-adenosyl-L-methionine-dependent methyltransferases"/>
    <property type="match status" value="1"/>
</dbReference>
<reference key="1">
    <citation type="journal article" date="2009" name="Appl. Environ. Microbiol.">
        <title>Three genomes from the phylum Acidobacteria provide insight into the lifestyles of these microorganisms in soils.</title>
        <authorList>
            <person name="Ward N.L."/>
            <person name="Challacombe J.F."/>
            <person name="Janssen P.H."/>
            <person name="Henrissat B."/>
            <person name="Coutinho P.M."/>
            <person name="Wu M."/>
            <person name="Xie G."/>
            <person name="Haft D.H."/>
            <person name="Sait M."/>
            <person name="Badger J."/>
            <person name="Barabote R.D."/>
            <person name="Bradley B."/>
            <person name="Brettin T.S."/>
            <person name="Brinkac L.M."/>
            <person name="Bruce D."/>
            <person name="Creasy T."/>
            <person name="Daugherty S.C."/>
            <person name="Davidsen T.M."/>
            <person name="DeBoy R.T."/>
            <person name="Detter J.C."/>
            <person name="Dodson R.J."/>
            <person name="Durkin A.S."/>
            <person name="Ganapathy A."/>
            <person name="Gwinn-Giglio M."/>
            <person name="Han C.S."/>
            <person name="Khouri H."/>
            <person name="Kiss H."/>
            <person name="Kothari S.P."/>
            <person name="Madupu R."/>
            <person name="Nelson K.E."/>
            <person name="Nelson W.C."/>
            <person name="Paulsen I."/>
            <person name="Penn K."/>
            <person name="Ren Q."/>
            <person name="Rosovitz M.J."/>
            <person name="Selengut J.D."/>
            <person name="Shrivastava S."/>
            <person name="Sullivan S.A."/>
            <person name="Tapia R."/>
            <person name="Thompson L.S."/>
            <person name="Watkins K.L."/>
            <person name="Yang Q."/>
            <person name="Yu C."/>
            <person name="Zafar N."/>
            <person name="Zhou L."/>
            <person name="Kuske C.R."/>
        </authorList>
    </citation>
    <scope>NUCLEOTIDE SEQUENCE [LARGE SCALE GENOMIC DNA]</scope>
    <source>
        <strain>Ellin6076</strain>
    </source>
</reference>
<gene>
    <name evidence="1" type="primary">rsmH</name>
    <name type="synonym">mraW</name>
    <name type="ordered locus">Acid_7319</name>
</gene>
<organism>
    <name type="scientific">Solibacter usitatus (strain Ellin6076)</name>
    <dbReference type="NCBI Taxonomy" id="234267"/>
    <lineage>
        <taxon>Bacteria</taxon>
        <taxon>Pseudomonadati</taxon>
        <taxon>Acidobacteriota</taxon>
        <taxon>Terriglobia</taxon>
        <taxon>Bryobacterales</taxon>
        <taxon>Solibacteraceae</taxon>
        <taxon>Candidatus Solibacter</taxon>
    </lineage>
</organism>